<dbReference type="EMBL" id="AJ235271">
    <property type="protein sequence ID" value="CAA14812.1"/>
    <property type="molecule type" value="Genomic_DNA"/>
</dbReference>
<dbReference type="PIR" id="B71692">
    <property type="entry name" value="B71692"/>
</dbReference>
<dbReference type="RefSeq" id="NP_220736.1">
    <property type="nucleotide sequence ID" value="NC_000963.1"/>
</dbReference>
<dbReference type="EnsemblBacteria" id="CAA14812">
    <property type="protein sequence ID" value="CAA14812"/>
    <property type="gene ID" value="CAA14812"/>
</dbReference>
<dbReference type="KEGG" id="rpr:RP352"/>
<dbReference type="HOGENOM" id="CLU_3238941_0_0_5"/>
<dbReference type="Proteomes" id="UP000002480">
    <property type="component" value="Chromosome"/>
</dbReference>
<keyword id="KW-1185">Reference proteome</keyword>
<accession>Q9ZDH6</accession>
<reference key="1">
    <citation type="journal article" date="1998" name="Nature">
        <title>The genome sequence of Rickettsia prowazekii and the origin of mitochondria.</title>
        <authorList>
            <person name="Andersson S.G.E."/>
            <person name="Zomorodipour A."/>
            <person name="Andersson J.O."/>
            <person name="Sicheritz-Ponten T."/>
            <person name="Alsmark U.C.M."/>
            <person name="Podowski R.M."/>
            <person name="Naeslund A.K."/>
            <person name="Eriksson A.-S."/>
            <person name="Winkler H.H."/>
            <person name="Kurland C.G."/>
        </authorList>
    </citation>
    <scope>NUCLEOTIDE SEQUENCE [LARGE SCALE GENOMIC DNA]</scope>
    <source>
        <strain>Madrid E</strain>
    </source>
</reference>
<name>Y352_RICPR</name>
<sequence>MILLKVNHKPFMLPCVVIASLAYSEQVGWNRQLLPSSGEIKYL</sequence>
<feature type="chain" id="PRO_0000101352" description="Uncharacterized protein RP352">
    <location>
        <begin position="1"/>
        <end position="43"/>
    </location>
</feature>
<protein>
    <recommendedName>
        <fullName>Uncharacterized protein RP352</fullName>
    </recommendedName>
</protein>
<gene>
    <name type="ordered locus">RP352</name>
</gene>
<organism>
    <name type="scientific">Rickettsia prowazekii (strain Madrid E)</name>
    <dbReference type="NCBI Taxonomy" id="272947"/>
    <lineage>
        <taxon>Bacteria</taxon>
        <taxon>Pseudomonadati</taxon>
        <taxon>Pseudomonadota</taxon>
        <taxon>Alphaproteobacteria</taxon>
        <taxon>Rickettsiales</taxon>
        <taxon>Rickettsiaceae</taxon>
        <taxon>Rickettsieae</taxon>
        <taxon>Rickettsia</taxon>
        <taxon>typhus group</taxon>
    </lineage>
</organism>
<proteinExistence type="predicted"/>